<comment type="catalytic activity">
    <reaction>
        <text>(S)-lactate + NAD(+) = pyruvate + NADH + H(+)</text>
        <dbReference type="Rhea" id="RHEA:23444"/>
        <dbReference type="ChEBI" id="CHEBI:15361"/>
        <dbReference type="ChEBI" id="CHEBI:15378"/>
        <dbReference type="ChEBI" id="CHEBI:16651"/>
        <dbReference type="ChEBI" id="CHEBI:57540"/>
        <dbReference type="ChEBI" id="CHEBI:57945"/>
        <dbReference type="EC" id="1.1.1.27"/>
    </reaction>
</comment>
<comment type="pathway">
    <text>Fermentation; pyruvate fermentation to lactate; (S)-lactate from pyruvate: step 1/1.</text>
</comment>
<comment type="interaction">
    <interactant intactId="EBI-1108377">
        <id>Q9BYZ2</id>
    </interactant>
    <interactant intactId="EBI-1222467">
        <id>P02649</id>
        <label>APOE</label>
    </interactant>
    <organismsDiffer>false</organismsDiffer>
    <experiments>3</experiments>
</comment>
<comment type="interaction">
    <interactant intactId="EBI-1108377">
        <id>Q9BYZ2</id>
    </interactant>
    <interactant intactId="EBI-77613">
        <id>P05067</id>
        <label>APP</label>
    </interactant>
    <organismsDiffer>false</organismsDiffer>
    <experiments>3</experiments>
</comment>
<comment type="interaction">
    <interactant intactId="EBI-1108377">
        <id>Q9BYZ2</id>
    </interactant>
    <interactant intactId="EBI-17264467">
        <id>P05067-2</id>
        <label>APP</label>
    </interactant>
    <organismsDiffer>false</organismsDiffer>
    <experiments>3</experiments>
</comment>
<comment type="interaction">
    <interactant intactId="EBI-1108377">
        <id>Q9BYZ2</id>
    </interactant>
    <interactant intactId="EBI-930964">
        <id>P54253</id>
        <label>ATXN1</label>
    </interactant>
    <organismsDiffer>false</organismsDiffer>
    <experiments>6</experiments>
</comment>
<comment type="interaction">
    <interactant intactId="EBI-1108377">
        <id>Q9BYZ2</id>
    </interactant>
    <interactant intactId="EBI-946046">
        <id>P54252</id>
        <label>ATXN3</label>
    </interactant>
    <organismsDiffer>false</organismsDiffer>
    <experiments>3</experiments>
</comment>
<comment type="interaction">
    <interactant intactId="EBI-1108377">
        <id>Q9BYZ2</id>
    </interactant>
    <interactant intactId="EBI-25840379">
        <id>Q14203-5</id>
        <label>DCTN1</label>
    </interactant>
    <organismsDiffer>false</organismsDiffer>
    <experiments>3</experiments>
</comment>
<comment type="interaction">
    <interactant intactId="EBI-1108377">
        <id>Q9BYZ2</id>
    </interactant>
    <interactant intactId="EBI-299674">
        <id>Q14103</id>
        <label>HNRNPD</label>
    </interactant>
    <organismsDiffer>false</organismsDiffer>
    <experiments>2</experiments>
</comment>
<comment type="interaction">
    <interactant intactId="EBI-1108377">
        <id>Q9BYZ2</id>
    </interactant>
    <interactant intactId="EBI-466029">
        <id>P42858</id>
        <label>HTT</label>
    </interactant>
    <organismsDiffer>false</organismsDiffer>
    <experiments>18</experiments>
</comment>
<comment type="interaction">
    <interactant intactId="EBI-1108377">
        <id>Q9BYZ2</id>
    </interactant>
    <interactant intactId="EBI-716486">
        <id>Q92597</id>
        <label>NDRG1</label>
    </interactant>
    <organismsDiffer>false</organismsDiffer>
    <experiments>3</experiments>
</comment>
<comment type="interaction">
    <interactant intactId="EBI-1108377">
        <id>Q9BYZ2</id>
    </interactant>
    <interactant intactId="EBI-748974">
        <id>Q96CV9</id>
        <label>OPTN</label>
    </interactant>
    <organismsDiffer>false</organismsDiffer>
    <experiments>3</experiments>
</comment>
<comment type="interaction">
    <interactant intactId="EBI-1108377">
        <id>Q9BYZ2</id>
    </interactant>
    <interactant intactId="EBI-1164361">
        <id>Q99497</id>
        <label>PARK7</label>
    </interactant>
    <organismsDiffer>false</organismsDiffer>
    <experiments>3</experiments>
</comment>
<comment type="interaction">
    <interactant intactId="EBI-1108377">
        <id>Q9BYZ2</id>
    </interactant>
    <interactant intactId="EBI-2846068">
        <id>Q9BXM7</id>
        <label>PINK1</label>
    </interactant>
    <organismsDiffer>false</organismsDiffer>
    <experiments>3</experiments>
</comment>
<comment type="interaction">
    <interactant intactId="EBI-1108377">
        <id>Q9BYZ2</id>
    </interactant>
    <interactant intactId="EBI-50433196">
        <id>A0A6Q8PF08</id>
        <label>PMP22</label>
    </interactant>
    <organismsDiffer>false</organismsDiffer>
    <experiments>3</experiments>
</comment>
<comment type="interaction">
    <interactant intactId="EBI-1108377">
        <id>Q9BYZ2</id>
    </interactant>
    <interactant intactId="EBI-21251460">
        <id>O60260-5</id>
        <label>PRKN</label>
    </interactant>
    <organismsDiffer>false</organismsDiffer>
    <experiments>6</experiments>
</comment>
<comment type="interaction">
    <interactant intactId="EBI-1108377">
        <id>Q9BYZ2</id>
    </interactant>
    <interactant intactId="EBI-11047108">
        <id>P49768-2</id>
        <label>PSEN1</label>
    </interactant>
    <organismsDiffer>false</organismsDiffer>
    <experiments>6</experiments>
</comment>
<comment type="interaction">
    <interactant intactId="EBI-1108377">
        <id>Q9BYZ2</id>
    </interactant>
    <interactant intactId="EBI-985879">
        <id>P37840</id>
        <label>SNCA</label>
    </interactant>
    <organismsDiffer>false</organismsDiffer>
    <experiments>3</experiments>
</comment>
<comment type="interaction">
    <interactant intactId="EBI-1108377">
        <id>Q9BYZ2</id>
    </interactant>
    <interactant intactId="EBI-990792">
        <id>P00441</id>
        <label>SOD1</label>
    </interactant>
    <organismsDiffer>false</organismsDiffer>
    <experiments>3</experiments>
</comment>
<comment type="interaction">
    <interactant intactId="EBI-1108377">
        <id>Q9BYZ2</id>
    </interactant>
    <interactant intactId="EBI-372899">
        <id>Q13148</id>
        <label>TARDBP</label>
    </interactant>
    <organismsDiffer>false</organismsDiffer>
    <experiments>6</experiments>
</comment>
<comment type="interaction">
    <interactant intactId="EBI-1108377">
        <id>Q9BYZ2</id>
    </interactant>
    <interactant intactId="EBI-2902553">
        <id>Q9NUW8</id>
        <label>TDP1</label>
    </interactant>
    <organismsDiffer>false</organismsDiffer>
    <experiments>3</experiments>
</comment>
<comment type="interaction">
    <interactant intactId="EBI-1108377">
        <id>Q9BYZ2</id>
    </interactant>
    <interactant intactId="EBI-714860">
        <id>P09936</id>
        <label>UCHL1</label>
    </interactant>
    <organismsDiffer>false</organismsDiffer>
    <experiments>3</experiments>
</comment>
<comment type="tissue specificity">
    <text>Testis specific.</text>
</comment>
<comment type="developmental stage">
    <text>Higher expression level in adult testis as compared to 6-week-old fetal testis.</text>
</comment>
<comment type="similarity">
    <text evidence="4">Belongs to the LDH/MDH superfamily. LDH family.</text>
</comment>
<comment type="caution">
    <text evidence="4">It is uncertain whether Met-1 or Met-50 is the initiator.</text>
</comment>
<name>LDH6B_HUMAN</name>
<accession>Q9BYZ2</accession>
<accession>Q6DUY4</accession>
<accession>Q96LI2</accession>
<dbReference type="EC" id="1.1.1.27"/>
<dbReference type="EMBL" id="AY009108">
    <property type="protein sequence ID" value="AAG49399.1"/>
    <property type="molecule type" value="mRNA"/>
</dbReference>
<dbReference type="EMBL" id="AY642121">
    <property type="protein sequence ID" value="AAT65080.1"/>
    <property type="molecule type" value="mRNA"/>
</dbReference>
<dbReference type="EMBL" id="AK058192">
    <property type="protein sequence ID" value="BAB71710.1"/>
    <property type="molecule type" value="mRNA"/>
</dbReference>
<dbReference type="EMBL" id="BC022034">
    <property type="protein sequence ID" value="AAH22034.1"/>
    <property type="molecule type" value="mRNA"/>
</dbReference>
<dbReference type="CCDS" id="CCDS10171.1"/>
<dbReference type="RefSeq" id="NP_149972.1">
    <property type="nucleotide sequence ID" value="NM_033195.3"/>
</dbReference>
<dbReference type="SMR" id="Q9BYZ2"/>
<dbReference type="BioGRID" id="124950">
    <property type="interactions" value="51"/>
</dbReference>
<dbReference type="ComplexPortal" id="CPX-6622">
    <property type="entry name" value="L-lactate dehydrogenase complex, LDHAL6B variant"/>
</dbReference>
<dbReference type="FunCoup" id="Q9BYZ2">
    <property type="interactions" value="333"/>
</dbReference>
<dbReference type="IntAct" id="Q9BYZ2">
    <property type="interactions" value="37"/>
</dbReference>
<dbReference type="MINT" id="Q9BYZ2"/>
<dbReference type="STRING" id="9606.ENSP00000302393"/>
<dbReference type="DrugBank" id="DB00157">
    <property type="generic name" value="NADH"/>
</dbReference>
<dbReference type="GlyGen" id="Q9BYZ2">
    <property type="glycosylation" value="1 site, 1 O-linked glycan (1 site)"/>
</dbReference>
<dbReference type="iPTMnet" id="Q9BYZ2"/>
<dbReference type="PhosphoSitePlus" id="Q9BYZ2"/>
<dbReference type="BioMuta" id="LDHAL6B"/>
<dbReference type="DMDM" id="116242616"/>
<dbReference type="jPOST" id="Q9BYZ2"/>
<dbReference type="MassIVE" id="Q9BYZ2"/>
<dbReference type="PaxDb" id="9606-ENSP00000302393"/>
<dbReference type="PeptideAtlas" id="Q9BYZ2"/>
<dbReference type="ProteomicsDB" id="79743"/>
<dbReference type="Antibodypedia" id="25391">
    <property type="antibodies" value="139 antibodies from 24 providers"/>
</dbReference>
<dbReference type="DNASU" id="92483"/>
<dbReference type="Ensembl" id="ENST00000307144.6">
    <property type="protein sequence ID" value="ENSP00000302393.4"/>
    <property type="gene ID" value="ENSG00000171989.6"/>
</dbReference>
<dbReference type="GeneID" id="92483"/>
<dbReference type="KEGG" id="hsa:92483"/>
<dbReference type="MANE-Select" id="ENST00000307144.6">
    <property type="protein sequence ID" value="ENSP00000302393.4"/>
    <property type="RefSeq nucleotide sequence ID" value="NM_033195.3"/>
    <property type="RefSeq protein sequence ID" value="NP_149972.1"/>
</dbReference>
<dbReference type="UCSC" id="uc002agb.5">
    <property type="organism name" value="human"/>
</dbReference>
<dbReference type="AGR" id="HGNC:21481"/>
<dbReference type="CTD" id="92483"/>
<dbReference type="GeneCards" id="LDHAL6B"/>
<dbReference type="HGNC" id="HGNC:21481">
    <property type="gene designation" value="LDHAL6B"/>
</dbReference>
<dbReference type="HPA" id="ENSG00000171989">
    <property type="expression patterns" value="Tissue enriched (testis)"/>
</dbReference>
<dbReference type="neXtProt" id="NX_Q9BYZ2"/>
<dbReference type="OpenTargets" id="ENSG00000171989"/>
<dbReference type="PharmGKB" id="PA134943157"/>
<dbReference type="VEuPathDB" id="HostDB:ENSG00000171989"/>
<dbReference type="eggNOG" id="KOG1495">
    <property type="taxonomic scope" value="Eukaryota"/>
</dbReference>
<dbReference type="GeneTree" id="ENSGT00940000163242"/>
<dbReference type="HOGENOM" id="CLU_045401_0_2_1"/>
<dbReference type="InParanoid" id="Q9BYZ2"/>
<dbReference type="OMA" id="RVIGNGC"/>
<dbReference type="OrthoDB" id="5405561at2759"/>
<dbReference type="PAN-GO" id="Q9BYZ2">
    <property type="GO annotations" value="1 GO annotation based on evolutionary models"/>
</dbReference>
<dbReference type="PhylomeDB" id="Q9BYZ2"/>
<dbReference type="TreeFam" id="TF314963"/>
<dbReference type="PathwayCommons" id="Q9BYZ2"/>
<dbReference type="Reactome" id="R-HSA-70268">
    <property type="pathway name" value="Pyruvate metabolism"/>
</dbReference>
<dbReference type="SignaLink" id="Q9BYZ2"/>
<dbReference type="UniPathway" id="UPA00554">
    <property type="reaction ID" value="UER00611"/>
</dbReference>
<dbReference type="BioGRID-ORCS" id="92483">
    <property type="hits" value="14 hits in 1140 CRISPR screens"/>
</dbReference>
<dbReference type="GenomeRNAi" id="92483"/>
<dbReference type="Pharos" id="Q9BYZ2">
    <property type="development level" value="Tbio"/>
</dbReference>
<dbReference type="PRO" id="PR:Q9BYZ2"/>
<dbReference type="Proteomes" id="UP000005640">
    <property type="component" value="Chromosome 15"/>
</dbReference>
<dbReference type="RNAct" id="Q9BYZ2">
    <property type="molecule type" value="protein"/>
</dbReference>
<dbReference type="Bgee" id="ENSG00000171989">
    <property type="expression patterns" value="Expressed in right testis and 71 other cell types or tissues"/>
</dbReference>
<dbReference type="ExpressionAtlas" id="Q9BYZ2">
    <property type="expression patterns" value="baseline and differential"/>
</dbReference>
<dbReference type="GO" id="GO:0005737">
    <property type="term" value="C:cytoplasm"/>
    <property type="evidence" value="ECO:0000314"/>
    <property type="project" value="ComplexPortal"/>
</dbReference>
<dbReference type="GO" id="GO:0005759">
    <property type="term" value="C:mitochondrial matrix"/>
    <property type="evidence" value="ECO:0000304"/>
    <property type="project" value="Reactome"/>
</dbReference>
<dbReference type="GO" id="GO:0005739">
    <property type="term" value="C:mitochondrion"/>
    <property type="evidence" value="ECO:0000318"/>
    <property type="project" value="GO_Central"/>
</dbReference>
<dbReference type="GO" id="GO:0005634">
    <property type="term" value="C:nucleus"/>
    <property type="evidence" value="ECO:0007005"/>
    <property type="project" value="UniProtKB"/>
</dbReference>
<dbReference type="GO" id="GO:1990204">
    <property type="term" value="C:oxidoreductase complex"/>
    <property type="evidence" value="ECO:0000303"/>
    <property type="project" value="ComplexPortal"/>
</dbReference>
<dbReference type="GO" id="GO:0004459">
    <property type="term" value="F:L-lactate dehydrogenase activity"/>
    <property type="evidence" value="ECO:0000318"/>
    <property type="project" value="GO_Central"/>
</dbReference>
<dbReference type="GO" id="GO:0006089">
    <property type="term" value="P:lactate metabolic process"/>
    <property type="evidence" value="ECO:0000314"/>
    <property type="project" value="ComplexPortal"/>
</dbReference>
<dbReference type="GO" id="GO:0006090">
    <property type="term" value="P:pyruvate metabolic process"/>
    <property type="evidence" value="ECO:0000314"/>
    <property type="project" value="ComplexPortal"/>
</dbReference>
<dbReference type="CDD" id="cd05293">
    <property type="entry name" value="LDH_1"/>
    <property type="match status" value="1"/>
</dbReference>
<dbReference type="FunFam" id="3.40.50.720:FF:000029">
    <property type="entry name" value="L-lactate dehydrogenase A chain"/>
    <property type="match status" value="1"/>
</dbReference>
<dbReference type="FunFam" id="3.90.110.10:FF:000003">
    <property type="entry name" value="L-lactate dehydrogenase A chain"/>
    <property type="match status" value="1"/>
</dbReference>
<dbReference type="Gene3D" id="3.90.110.10">
    <property type="entry name" value="Lactate dehydrogenase/glycoside hydrolase, family 4, C-terminal"/>
    <property type="match status" value="1"/>
</dbReference>
<dbReference type="Gene3D" id="3.40.50.720">
    <property type="entry name" value="NAD(P)-binding Rossmann-like Domain"/>
    <property type="match status" value="1"/>
</dbReference>
<dbReference type="HAMAP" id="MF_00488">
    <property type="entry name" value="Lactate_dehydrog"/>
    <property type="match status" value="1"/>
</dbReference>
<dbReference type="InterPro" id="IPR001557">
    <property type="entry name" value="L-lactate/malate_DH"/>
</dbReference>
<dbReference type="InterPro" id="IPR011304">
    <property type="entry name" value="L-lactate_DH"/>
</dbReference>
<dbReference type="InterPro" id="IPR018177">
    <property type="entry name" value="L-lactate_DH_AS"/>
</dbReference>
<dbReference type="InterPro" id="IPR022383">
    <property type="entry name" value="Lactate/malate_DH_C"/>
</dbReference>
<dbReference type="InterPro" id="IPR001236">
    <property type="entry name" value="Lactate/malate_DH_N"/>
</dbReference>
<dbReference type="InterPro" id="IPR015955">
    <property type="entry name" value="Lactate_DH/Glyco_Ohase_4_C"/>
</dbReference>
<dbReference type="InterPro" id="IPR036291">
    <property type="entry name" value="NAD(P)-bd_dom_sf"/>
</dbReference>
<dbReference type="NCBIfam" id="TIGR01771">
    <property type="entry name" value="L-LDH-NAD"/>
    <property type="match status" value="1"/>
</dbReference>
<dbReference type="PANTHER" id="PTHR43128">
    <property type="entry name" value="L-2-HYDROXYCARBOXYLATE DEHYDROGENASE (NAD(P)(+))"/>
    <property type="match status" value="1"/>
</dbReference>
<dbReference type="PANTHER" id="PTHR43128:SF8">
    <property type="entry name" value="L-LACTATE DEHYDROGENASE A-LIKE 6B"/>
    <property type="match status" value="1"/>
</dbReference>
<dbReference type="Pfam" id="PF02866">
    <property type="entry name" value="Ldh_1_C"/>
    <property type="match status" value="1"/>
</dbReference>
<dbReference type="Pfam" id="PF00056">
    <property type="entry name" value="Ldh_1_N"/>
    <property type="match status" value="1"/>
</dbReference>
<dbReference type="PIRSF" id="PIRSF000102">
    <property type="entry name" value="Lac_mal_DH"/>
    <property type="match status" value="1"/>
</dbReference>
<dbReference type="PRINTS" id="PR00086">
    <property type="entry name" value="LLDHDRGNASE"/>
</dbReference>
<dbReference type="SUPFAM" id="SSF56327">
    <property type="entry name" value="LDH C-terminal domain-like"/>
    <property type="match status" value="1"/>
</dbReference>
<dbReference type="SUPFAM" id="SSF51735">
    <property type="entry name" value="NAD(P)-binding Rossmann-fold domains"/>
    <property type="match status" value="1"/>
</dbReference>
<dbReference type="PROSITE" id="PS00064">
    <property type="entry name" value="L_LDH"/>
    <property type="match status" value="1"/>
</dbReference>
<gene>
    <name type="primary">LDHAL6B</name>
    <name type="synonym">LDHAL6</name>
    <name type="synonym">LDHL</name>
</gene>
<feature type="chain" id="PRO_0000168458" description="L-lactate dehydrogenase A-like 6B">
    <location>
        <begin position="1"/>
        <end position="381"/>
    </location>
</feature>
<feature type="active site" description="Proton acceptor" evidence="1">
    <location>
        <position position="242"/>
    </location>
</feature>
<feature type="binding site" evidence="1">
    <location>
        <begin position="101"/>
        <end position="106"/>
    </location>
    <ligand>
        <name>NAD(+)</name>
        <dbReference type="ChEBI" id="CHEBI:57540"/>
    </ligand>
</feature>
<feature type="binding site" evidence="1">
    <location>
        <position position="148"/>
    </location>
    <ligand>
        <name>NAD(+)</name>
        <dbReference type="ChEBI" id="CHEBI:57540"/>
    </ligand>
</feature>
<feature type="binding site" evidence="1">
    <location>
        <position position="155"/>
    </location>
    <ligand>
        <name>substrate</name>
    </ligand>
</feature>
<feature type="binding site" evidence="1">
    <location>
        <position position="187"/>
    </location>
    <ligand>
        <name>NAD(+)</name>
        <dbReference type="ChEBI" id="CHEBI:57540"/>
    </ligand>
</feature>
<feature type="binding site" evidence="1">
    <location>
        <position position="187"/>
    </location>
    <ligand>
        <name>substrate</name>
    </ligand>
</feature>
<feature type="binding site" evidence="1">
    <location>
        <position position="218"/>
    </location>
    <ligand>
        <name>substrate</name>
    </ligand>
</feature>
<feature type="binding site" evidence="1">
    <location>
        <position position="297"/>
    </location>
    <ligand>
        <name>substrate</name>
    </ligand>
</feature>
<feature type="sequence variant" id="VAR_027936" description="In dbSNP:rs3809530." evidence="2 3">
    <original>V</original>
    <variation>M</variation>
    <location>
        <position position="14"/>
    </location>
</feature>
<feature type="sequence variant" id="VAR_027937" description="In dbSNP:rs3809529." evidence="2 3">
    <original>P</original>
    <variation>L</variation>
    <location>
        <position position="30"/>
    </location>
</feature>
<feature type="sequence variant" id="VAR_049757" description="In dbSNP:rs35212259.">
    <original>P</original>
    <variation>S</variation>
    <location>
        <position position="259"/>
    </location>
</feature>
<feature type="sequence variant" id="VAR_027938" description="In dbSNP:rs3825937." evidence="2 3">
    <original>I</original>
    <variation>T</variation>
    <location>
        <position position="326"/>
    </location>
</feature>
<reference key="1">
    <citation type="submission" date="2000-10" db="EMBL/GenBank/DDBJ databases">
        <title>A novel intronless human testis lactate dehydrogenase gene from adult testis.</title>
        <authorList>
            <person name="Sha J.H."/>
            <person name="Li J.M."/>
            <person name="Zhou Z.M."/>
        </authorList>
    </citation>
    <scope>NUCLEOTIDE SEQUENCE [MRNA]</scope>
    <source>
        <tissue>Testis</tissue>
    </source>
</reference>
<reference key="2">
    <citation type="submission" date="2004-06" db="EMBL/GenBank/DDBJ databases">
        <authorList>
            <person name="Tang W.W."/>
        </authorList>
    </citation>
    <scope>NUCLEOTIDE SEQUENCE [MRNA]</scope>
</reference>
<reference key="3">
    <citation type="journal article" date="2004" name="Nat. Genet.">
        <title>Complete sequencing and characterization of 21,243 full-length human cDNAs.</title>
        <authorList>
            <person name="Ota T."/>
            <person name="Suzuki Y."/>
            <person name="Nishikawa T."/>
            <person name="Otsuki T."/>
            <person name="Sugiyama T."/>
            <person name="Irie R."/>
            <person name="Wakamatsu A."/>
            <person name="Hayashi K."/>
            <person name="Sato H."/>
            <person name="Nagai K."/>
            <person name="Kimura K."/>
            <person name="Makita H."/>
            <person name="Sekine M."/>
            <person name="Obayashi M."/>
            <person name="Nishi T."/>
            <person name="Shibahara T."/>
            <person name="Tanaka T."/>
            <person name="Ishii S."/>
            <person name="Yamamoto J."/>
            <person name="Saito K."/>
            <person name="Kawai Y."/>
            <person name="Isono Y."/>
            <person name="Nakamura Y."/>
            <person name="Nagahari K."/>
            <person name="Murakami K."/>
            <person name="Yasuda T."/>
            <person name="Iwayanagi T."/>
            <person name="Wagatsuma M."/>
            <person name="Shiratori A."/>
            <person name="Sudo H."/>
            <person name="Hosoiri T."/>
            <person name="Kaku Y."/>
            <person name="Kodaira H."/>
            <person name="Kondo H."/>
            <person name="Sugawara M."/>
            <person name="Takahashi M."/>
            <person name="Kanda K."/>
            <person name="Yokoi T."/>
            <person name="Furuya T."/>
            <person name="Kikkawa E."/>
            <person name="Omura Y."/>
            <person name="Abe K."/>
            <person name="Kamihara K."/>
            <person name="Katsuta N."/>
            <person name="Sato K."/>
            <person name="Tanikawa M."/>
            <person name="Yamazaki M."/>
            <person name="Ninomiya K."/>
            <person name="Ishibashi T."/>
            <person name="Yamashita H."/>
            <person name="Murakawa K."/>
            <person name="Fujimori K."/>
            <person name="Tanai H."/>
            <person name="Kimata M."/>
            <person name="Watanabe M."/>
            <person name="Hiraoka S."/>
            <person name="Chiba Y."/>
            <person name="Ishida S."/>
            <person name="Ono Y."/>
            <person name="Takiguchi S."/>
            <person name="Watanabe S."/>
            <person name="Yosida M."/>
            <person name="Hotuta T."/>
            <person name="Kusano J."/>
            <person name="Kanehori K."/>
            <person name="Takahashi-Fujii A."/>
            <person name="Hara H."/>
            <person name="Tanase T.-O."/>
            <person name="Nomura Y."/>
            <person name="Togiya S."/>
            <person name="Komai F."/>
            <person name="Hara R."/>
            <person name="Takeuchi K."/>
            <person name="Arita M."/>
            <person name="Imose N."/>
            <person name="Musashino K."/>
            <person name="Yuuki H."/>
            <person name="Oshima A."/>
            <person name="Sasaki N."/>
            <person name="Aotsuka S."/>
            <person name="Yoshikawa Y."/>
            <person name="Matsunawa H."/>
            <person name="Ichihara T."/>
            <person name="Shiohata N."/>
            <person name="Sano S."/>
            <person name="Moriya S."/>
            <person name="Momiyama H."/>
            <person name="Satoh N."/>
            <person name="Takami S."/>
            <person name="Terashima Y."/>
            <person name="Suzuki O."/>
            <person name="Nakagawa S."/>
            <person name="Senoh A."/>
            <person name="Mizoguchi H."/>
            <person name="Goto Y."/>
            <person name="Shimizu F."/>
            <person name="Wakebe H."/>
            <person name="Hishigaki H."/>
            <person name="Watanabe T."/>
            <person name="Sugiyama A."/>
            <person name="Takemoto M."/>
            <person name="Kawakami B."/>
            <person name="Yamazaki M."/>
            <person name="Watanabe K."/>
            <person name="Kumagai A."/>
            <person name="Itakura S."/>
            <person name="Fukuzumi Y."/>
            <person name="Fujimori Y."/>
            <person name="Komiyama M."/>
            <person name="Tashiro H."/>
            <person name="Tanigami A."/>
            <person name="Fujiwara T."/>
            <person name="Ono T."/>
            <person name="Yamada K."/>
            <person name="Fujii Y."/>
            <person name="Ozaki K."/>
            <person name="Hirao M."/>
            <person name="Ohmori Y."/>
            <person name="Kawabata A."/>
            <person name="Hikiji T."/>
            <person name="Kobatake N."/>
            <person name="Inagaki H."/>
            <person name="Ikema Y."/>
            <person name="Okamoto S."/>
            <person name="Okitani R."/>
            <person name="Kawakami T."/>
            <person name="Noguchi S."/>
            <person name="Itoh T."/>
            <person name="Shigeta K."/>
            <person name="Senba T."/>
            <person name="Matsumura K."/>
            <person name="Nakajima Y."/>
            <person name="Mizuno T."/>
            <person name="Morinaga M."/>
            <person name="Sasaki M."/>
            <person name="Togashi T."/>
            <person name="Oyama M."/>
            <person name="Hata H."/>
            <person name="Watanabe M."/>
            <person name="Komatsu T."/>
            <person name="Mizushima-Sugano J."/>
            <person name="Satoh T."/>
            <person name="Shirai Y."/>
            <person name="Takahashi Y."/>
            <person name="Nakagawa K."/>
            <person name="Okumura K."/>
            <person name="Nagase T."/>
            <person name="Nomura N."/>
            <person name="Kikuchi H."/>
            <person name="Masuho Y."/>
            <person name="Yamashita R."/>
            <person name="Nakai K."/>
            <person name="Yada T."/>
            <person name="Nakamura Y."/>
            <person name="Ohara O."/>
            <person name="Isogai T."/>
            <person name="Sugano S."/>
        </authorList>
    </citation>
    <scope>NUCLEOTIDE SEQUENCE [LARGE SCALE MRNA]</scope>
    <scope>VARIANTS MET-14; LEU-30 AND THR-326</scope>
    <source>
        <tissue>Testis</tissue>
    </source>
</reference>
<reference key="4">
    <citation type="journal article" date="2004" name="Genome Res.">
        <title>The status, quality, and expansion of the NIH full-length cDNA project: the Mammalian Gene Collection (MGC).</title>
        <authorList>
            <consortium name="The MGC Project Team"/>
        </authorList>
    </citation>
    <scope>NUCLEOTIDE SEQUENCE [LARGE SCALE MRNA]</scope>
    <scope>VARIANTS MET-14; LEU-30 AND THR-326</scope>
    <source>
        <tissue>Testis</tissue>
    </source>
</reference>
<keyword id="KW-0520">NAD</keyword>
<keyword id="KW-0560">Oxidoreductase</keyword>
<keyword id="KW-1267">Proteomics identification</keyword>
<keyword id="KW-1185">Reference proteome</keyword>
<protein>
    <recommendedName>
        <fullName>L-lactate dehydrogenase A-like 6B</fullName>
        <ecNumber>1.1.1.27</ecNumber>
    </recommendedName>
</protein>
<sequence length="381" mass="41943">MSWTVPVVRASQRVSSVGANFLCLGMALCPRQATRIPLNGTWLFTPVSKMATVKSELIERFTSEKPVHHSKVSIIGTGSVGMACAISILLKGLSDELALVDLDEDKLKGETMDLQHGSPFTKMPNIVCSKDYFVTANSNLVIITAGARQEKGETRLNLVQRNVAIFKLMISSIVQYSPHCKLIIVSNPVDILTYVAWKLSAFPKNRIIGSGCNLDTARFRFLIGQKLGIHSESCHGWILGEHGDSSVPVWSGVNIAGVPLKDLNSDIGTDKDPEQWKNVHKEVTATAYEIIKMKGYTSWAIGLSVADLTESILKNLRRIHPVSTIIKGLYGIDEEVFLSIPCILGENGITNLIKIKLTPEEEAHLKKSAKTLWEIQNKLKL</sequence>
<evidence type="ECO:0000250" key="1"/>
<evidence type="ECO:0000269" key="2">
    <source>
    </source>
</evidence>
<evidence type="ECO:0000269" key="3">
    <source>
    </source>
</evidence>
<evidence type="ECO:0000305" key="4"/>
<proteinExistence type="evidence at protein level"/>
<organism>
    <name type="scientific">Homo sapiens</name>
    <name type="common">Human</name>
    <dbReference type="NCBI Taxonomy" id="9606"/>
    <lineage>
        <taxon>Eukaryota</taxon>
        <taxon>Metazoa</taxon>
        <taxon>Chordata</taxon>
        <taxon>Craniata</taxon>
        <taxon>Vertebrata</taxon>
        <taxon>Euteleostomi</taxon>
        <taxon>Mammalia</taxon>
        <taxon>Eutheria</taxon>
        <taxon>Euarchontoglires</taxon>
        <taxon>Primates</taxon>
        <taxon>Haplorrhini</taxon>
        <taxon>Catarrhini</taxon>
        <taxon>Hominidae</taxon>
        <taxon>Homo</taxon>
    </lineage>
</organism>